<protein>
    <recommendedName>
        <fullName>CDGSH iron-sulfur domain-containing protein 2 homolog</fullName>
    </recommendedName>
</protein>
<comment type="cofactor">
    <cofactor evidence="1">
        <name>[2Fe-2S] cluster</name>
        <dbReference type="ChEBI" id="CHEBI:190135"/>
    </cofactor>
    <text evidence="1">Binds 1 [2Fe-2S] cluster.</text>
</comment>
<comment type="subcellular location">
    <subcellularLocation>
        <location evidence="4">Endoplasmic reticulum membrane</location>
        <topology evidence="4">Single-pass membrane protein</topology>
    </subcellularLocation>
</comment>
<comment type="similarity">
    <text evidence="4">Belongs to the CISD protein family. CISD2 subfamily.</text>
</comment>
<reference key="1">
    <citation type="journal article" date="2007" name="Nature">
        <title>Evolution of genes and genomes on the Drosophila phylogeny.</title>
        <authorList>
            <consortium name="Drosophila 12 genomes consortium"/>
        </authorList>
    </citation>
    <scope>NUCLEOTIDE SEQUENCE [LARGE SCALE GENOMIC DNA]</scope>
    <source>
        <strain>Rob3c / Tucson 14021-0248.25</strain>
    </source>
</reference>
<feature type="chain" id="PRO_0000392028" description="CDGSH iron-sulfur domain-containing protein 2 homolog">
    <location>
        <begin position="1"/>
        <end position="133"/>
    </location>
</feature>
<feature type="topological domain" description="Lumenal" evidence="3">
    <location>
        <begin position="1"/>
        <end position="35"/>
    </location>
</feature>
<feature type="transmembrane region" description="Helical" evidence="3">
    <location>
        <begin position="36"/>
        <end position="58"/>
    </location>
</feature>
<feature type="topological domain" description="Cytoplasmic" evidence="3">
    <location>
        <begin position="59"/>
        <end position="133"/>
    </location>
</feature>
<feature type="binding site" evidence="1">
    <location>
        <position position="100"/>
    </location>
    <ligand>
        <name>[2Fe-2S] cluster</name>
        <dbReference type="ChEBI" id="CHEBI:190135"/>
    </ligand>
</feature>
<feature type="binding site" evidence="1">
    <location>
        <position position="102"/>
    </location>
    <ligand>
        <name>[2Fe-2S] cluster</name>
        <dbReference type="ChEBI" id="CHEBI:190135"/>
    </ligand>
</feature>
<feature type="binding site" evidence="1">
    <location>
        <position position="111"/>
    </location>
    <ligand>
        <name>[2Fe-2S] cluster</name>
        <dbReference type="ChEBI" id="CHEBI:190135"/>
    </ligand>
</feature>
<feature type="binding site" evidence="1">
    <location>
        <position position="115"/>
    </location>
    <ligand>
        <name>[2Fe-2S] cluster</name>
        <dbReference type="ChEBI" id="CHEBI:190135"/>
    </ligand>
</feature>
<proteinExistence type="inferred from homology"/>
<accession>B4HZ81</accession>
<organism>
    <name type="scientific">Drosophila sechellia</name>
    <name type="common">Fruit fly</name>
    <dbReference type="NCBI Taxonomy" id="7238"/>
    <lineage>
        <taxon>Eukaryota</taxon>
        <taxon>Metazoa</taxon>
        <taxon>Ecdysozoa</taxon>
        <taxon>Arthropoda</taxon>
        <taxon>Hexapoda</taxon>
        <taxon>Insecta</taxon>
        <taxon>Pterygota</taxon>
        <taxon>Neoptera</taxon>
        <taxon>Endopterygota</taxon>
        <taxon>Diptera</taxon>
        <taxon>Brachycera</taxon>
        <taxon>Muscomorpha</taxon>
        <taxon>Ephydroidea</taxon>
        <taxon>Drosophilidae</taxon>
        <taxon>Drosophila</taxon>
        <taxon>Sophophora</taxon>
    </lineage>
</organism>
<keyword id="KW-0001">2Fe-2S</keyword>
<keyword id="KW-0256">Endoplasmic reticulum</keyword>
<keyword id="KW-0408">Iron</keyword>
<keyword id="KW-0411">Iron-sulfur</keyword>
<keyword id="KW-0472">Membrane</keyword>
<keyword id="KW-0479">Metal-binding</keyword>
<keyword id="KW-1185">Reference proteome</keyword>
<keyword id="KW-0812">Transmembrane</keyword>
<keyword id="KW-1133">Transmembrane helix</keyword>
<evidence type="ECO:0000250" key="1"/>
<evidence type="ECO:0000250" key="2">
    <source>
        <dbReference type="UniProtKB" id="Q9VAM6"/>
    </source>
</evidence>
<evidence type="ECO:0000255" key="3"/>
<evidence type="ECO:0000305" key="4"/>
<dbReference type="EMBL" id="CH480819">
    <property type="protein sequence ID" value="EDW53338.1"/>
    <property type="molecule type" value="Genomic_DNA"/>
</dbReference>
<dbReference type="SMR" id="B4HZ81"/>
<dbReference type="STRING" id="7238.B4HZ81"/>
<dbReference type="EnsemblMetazoa" id="FBtr0195237">
    <property type="protein sequence ID" value="FBpp0193729"/>
    <property type="gene ID" value="FBgn0167189"/>
</dbReference>
<dbReference type="EnsemblMetazoa" id="XM_002037143.2">
    <property type="protein sequence ID" value="XP_002037179.1"/>
    <property type="gene ID" value="LOC6612676"/>
</dbReference>
<dbReference type="GeneID" id="6612676"/>
<dbReference type="KEGG" id="dse:6612676"/>
<dbReference type="CTD" id="493856"/>
<dbReference type="HOGENOM" id="CLU_132293_1_0_1"/>
<dbReference type="OMA" id="QIRKHEP"/>
<dbReference type="OrthoDB" id="326at7215"/>
<dbReference type="PhylomeDB" id="B4HZ81"/>
<dbReference type="Proteomes" id="UP000001292">
    <property type="component" value="Unassembled WGS sequence"/>
</dbReference>
<dbReference type="GO" id="GO:0005789">
    <property type="term" value="C:endoplasmic reticulum membrane"/>
    <property type="evidence" value="ECO:0007669"/>
    <property type="project" value="UniProtKB-SubCell"/>
</dbReference>
<dbReference type="GO" id="GO:0005741">
    <property type="term" value="C:mitochondrial outer membrane"/>
    <property type="evidence" value="ECO:0007669"/>
    <property type="project" value="EnsemblMetazoa"/>
</dbReference>
<dbReference type="GO" id="GO:0051537">
    <property type="term" value="F:2 iron, 2 sulfur cluster binding"/>
    <property type="evidence" value="ECO:0007669"/>
    <property type="project" value="UniProtKB-KW"/>
</dbReference>
<dbReference type="GO" id="GO:0046872">
    <property type="term" value="F:metal ion binding"/>
    <property type="evidence" value="ECO:0007669"/>
    <property type="project" value="UniProtKB-KW"/>
</dbReference>
<dbReference type="GO" id="GO:0006879">
    <property type="term" value="P:intracellular iron ion homeostasis"/>
    <property type="evidence" value="ECO:0007669"/>
    <property type="project" value="EnsemblMetazoa"/>
</dbReference>
<dbReference type="GO" id="GO:0006839">
    <property type="term" value="P:mitochondrial transport"/>
    <property type="evidence" value="ECO:0007669"/>
    <property type="project" value="EnsemblMetazoa"/>
</dbReference>
<dbReference type="GO" id="GO:0010506">
    <property type="term" value="P:regulation of autophagy"/>
    <property type="evidence" value="ECO:0007669"/>
    <property type="project" value="InterPro"/>
</dbReference>
<dbReference type="Gene3D" id="3.40.5.90">
    <property type="entry name" value="CDGSH iron-sulfur domain, mitoNEET-type"/>
    <property type="match status" value="1"/>
</dbReference>
<dbReference type="InterPro" id="IPR045131">
    <property type="entry name" value="CISD1/2"/>
</dbReference>
<dbReference type="InterPro" id="IPR018967">
    <property type="entry name" value="FeS-contain_CDGSH-typ"/>
</dbReference>
<dbReference type="InterPro" id="IPR019610">
    <property type="entry name" value="FeS-contain_mitoNEET_N"/>
</dbReference>
<dbReference type="InterPro" id="IPR042216">
    <property type="entry name" value="MitoNEET_CISD"/>
</dbReference>
<dbReference type="PANTHER" id="PTHR13680">
    <property type="entry name" value="CDGSH IRON-SULFUR DOMAIN-CONTAINING PROTEIN 1"/>
    <property type="match status" value="1"/>
</dbReference>
<dbReference type="PANTHER" id="PTHR13680:SF5">
    <property type="entry name" value="CDGSH IRON-SULFUR DOMAIN-CONTAINING PROTEIN 1"/>
    <property type="match status" value="1"/>
</dbReference>
<dbReference type="Pfam" id="PF10660">
    <property type="entry name" value="MitoNEET_N"/>
    <property type="match status" value="1"/>
</dbReference>
<dbReference type="Pfam" id="PF09360">
    <property type="entry name" value="zf-CDGSH"/>
    <property type="match status" value="1"/>
</dbReference>
<dbReference type="SMART" id="SM00704">
    <property type="entry name" value="ZnF_CDGSH"/>
    <property type="match status" value="1"/>
</dbReference>
<sequence length="133" mass="14639">MEPISHLVKSSLPNYLSSLPVPDSIGGWFKLSFKDWLALIPPTVVVAGIGYTAYLAYCPAARASCSAKISGRCNNQIRKNEPKVVDMIDVEDIAEKAAFCRCWKTKNWPYCDGSHGEHNKQTGDNVGPIVIKK</sequence>
<gene>
    <name evidence="2" type="primary">Cisd2</name>
    <name type="ORF">GM12252</name>
</gene>
<name>CISD2_DROSE</name>